<evidence type="ECO:0000250" key="1">
    <source>
        <dbReference type="UniProtKB" id="E3PJ86"/>
    </source>
</evidence>
<evidence type="ECO:0000250" key="2">
    <source>
        <dbReference type="UniProtKB" id="P45779"/>
    </source>
</evidence>
<evidence type="ECO:0000255" key="3"/>
<evidence type="ECO:0000256" key="4">
    <source>
        <dbReference type="SAM" id="MobiDB-lite"/>
    </source>
</evidence>
<evidence type="ECO:0000269" key="5">
    <source>
    </source>
</evidence>
<evidence type="ECO:0000305" key="6"/>
<evidence type="ECO:0000305" key="7">
    <source>
    </source>
</evidence>
<evidence type="ECO:0000305" key="8">
    <source>
    </source>
</evidence>
<evidence type="ECO:0007744" key="9">
    <source>
        <dbReference type="PDB" id="4K0U"/>
    </source>
</evidence>
<evidence type="ECO:0007829" key="10">
    <source>
        <dbReference type="PDB" id="4K0U"/>
    </source>
</evidence>
<sequence length="710" mass="76214">MLGKGIKKSWGWLGLTVLLLGSPCGWAAEFSASFKGTDIQEFINTVSKNLNKTVIIDPTVRGTISVRSYDMMNEGQYYQFFLSVLDVYGFSVVPMDNGVLKVIRSKDAKSSSIPLANNEQPGIGDELVTRVVPLNNVAARDLAPLLRQLNDNAGAGTVVHYEPSNVLLMTGRAAVIKRLVDIVNTVDKTGDREMVTVPLTYASAEDVAKLVNDLNKSDEKNALPSTMLANVVADGRTNSVVVSGEENARQRAVEMIRQLDRKQVVQGGTKVIYLKYAKALDLIEVLAGNGTSGNRNSSSSNASRPSSPRSGSSSNSNSSSGSSGSSSGSSSSSSSSSSMGFGSAFGSTSSSGGRTITIQGKEVTVRAHDQTNSLIITAPPDIMRDLEQVINQLDIRRPQVLVEAIIAEIQDADGLNLGIQWANKRAGMTQFTNTGIPISTAVIGTDQFRSNGTLTTAYASALSSFNGVTAGFYRGNWSMLLTALSSDSKNDVLATPSIVTLDNMEATFNVGQEVPVLTGSQTTSADNIFNTVERKTVGIKLRVKPQINEGDSVLLQIEQEVSSVADSNSSTNSSLGVTFNTRTVNNAVMVTNGETVVVGGLLDKTSVESNDKVPLLGDIPWLGSLFRSKSQEVRKRNLMLFLRPTIIRDPGQFQEASINKYRSFNNEQQQQRGEGNGVLDNNTLRLSGGNTYTFRQVQSSISDFYKPEGR</sequence>
<name>GSPD2_DICD3</name>
<keyword id="KW-0002">3D-structure</keyword>
<keyword id="KW-0998">Cell outer membrane</keyword>
<keyword id="KW-0472">Membrane</keyword>
<keyword id="KW-0653">Protein transport</keyword>
<keyword id="KW-1185">Reference proteome</keyword>
<keyword id="KW-0732">Signal</keyword>
<keyword id="KW-0812">Transmembrane</keyword>
<keyword id="KW-1134">Transmembrane beta strand</keyword>
<keyword id="KW-0813">Transport</keyword>
<proteinExistence type="evidence at protein level"/>
<comment type="function">
    <text evidence="1 2 7">Involved in a type II secretion system (T2SS, formerly general secretion pathway, GSP) for the export of proteins (By similarity). Required for the translocation of the multiple pectic enzymes (Probable). This subunit forms the outer membrane channel (By similarity).</text>
</comment>
<comment type="subunit">
    <text evidence="2 5">Forms a cylindrical channel with 15 subunits (By similarity). Interacts with pilotin OutS (PubMed:23897461).</text>
</comment>
<comment type="subcellular location">
    <subcellularLocation>
        <location evidence="1">Cell outer membrane</location>
    </subcellularLocation>
    <text evidence="2">Most of the protein is in the periplasm which it traverses to contact proteins of the cell inner membrane.</text>
</comment>
<comment type="domain">
    <text evidence="2 5">The N0, N1, N2 and N3 domains are periplasmic, while the secretin and S domains form a channel that is partially inserted in the outer membrane. The N1, N2 and N3 domains each form a periplasmic ring. The secretin domain forms a double beta-barrel structure; the outer barrel has a diameter of about 110 Angstroms while the inner barrel forms the central gate with a small pore in the closed state (By similarity). The S domain interacts with pilotin OutS (PubMed:23897461).</text>
</comment>
<comment type="similarity">
    <text evidence="6">Belongs to the bacterial secretin family. GSP D subfamily.</text>
</comment>
<organism>
    <name type="scientific">Dickeya dadantii (strain 3937)</name>
    <name type="common">Erwinia chrysanthemi (strain 3937)</name>
    <dbReference type="NCBI Taxonomy" id="198628"/>
    <lineage>
        <taxon>Bacteria</taxon>
        <taxon>Pseudomonadati</taxon>
        <taxon>Pseudomonadota</taxon>
        <taxon>Gammaproteobacteria</taxon>
        <taxon>Enterobacterales</taxon>
        <taxon>Pectobacteriaceae</taxon>
        <taxon>Dickeya</taxon>
    </lineage>
</organism>
<feature type="signal peptide" evidence="3">
    <location>
        <begin position="1"/>
        <end position="27"/>
    </location>
</feature>
<feature type="chain" id="PRO_0000013101" description="Secretin OutD">
    <location>
        <begin position="28"/>
        <end position="710"/>
    </location>
</feature>
<feature type="region of interest" description="N0" evidence="8">
    <location>
        <begin position="28"/>
        <end position="105"/>
    </location>
</feature>
<feature type="region of interest" description="N1" evidence="8">
    <location>
        <begin position="123"/>
        <end position="190"/>
    </location>
</feature>
<feature type="region of interest" description="N2" evidence="8">
    <location>
        <begin position="192"/>
        <end position="262"/>
    </location>
</feature>
<feature type="region of interest" description="N3" evidence="8">
    <location>
        <begin position="288"/>
        <end position="399"/>
    </location>
</feature>
<feature type="region of interest" description="Disordered" evidence="4">
    <location>
        <begin position="289"/>
        <end position="353"/>
    </location>
</feature>
<feature type="region of interest" description="Secretin" evidence="8">
    <location>
        <begin position="401"/>
        <end position="648"/>
    </location>
</feature>
<feature type="region of interest" description="S domain" evidence="8">
    <location>
        <begin position="691"/>
        <end position="710"/>
    </location>
</feature>
<feature type="site" description="May serve as a pivot that allows opening of the central gate for substrate egress" evidence="2">
    <location>
        <position position="511"/>
    </location>
</feature>
<feature type="helix" evidence="10">
    <location>
        <begin position="693"/>
        <end position="704"/>
    </location>
</feature>
<reference key="1">
    <citation type="journal article" date="1992" name="Mol. Microbiol.">
        <title>Some of the out genes involved in the secretion of pectate lyases in Erwinia chrysanthemi are regulated by kdgR.</title>
        <authorList>
            <person name="Condemine G."/>
            <person name="Dorel C."/>
            <person name="Hugouvieux-Cotte-Pattat N."/>
            <person name="Robert-Baudouy J."/>
        </authorList>
    </citation>
    <scope>NUCLEOTIDE SEQUENCE [GENOMIC DNA]</scope>
    <source>
        <strain>3937</strain>
    </source>
</reference>
<reference key="2">
    <citation type="journal article" date="2011" name="J. Bacteriol.">
        <title>Genome sequence of the plant-pathogenic bacterium Dickeya dadantii 3937.</title>
        <authorList>
            <person name="Glasner J.D."/>
            <person name="Yang C.H."/>
            <person name="Reverchon S."/>
            <person name="Hugouvieux-Cotte-Pattat N."/>
            <person name="Condemine G."/>
            <person name="Bohin J.P."/>
            <person name="Van Gijsegem F."/>
            <person name="Yang S."/>
            <person name="Franza T."/>
            <person name="Expert D."/>
            <person name="Plunkett G. III"/>
            <person name="San Francisco M.J."/>
            <person name="Charkowski A.O."/>
            <person name="Py B."/>
            <person name="Bell K."/>
            <person name="Rauscher L."/>
            <person name="Rodriguez-Palenzuela P."/>
            <person name="Toussaint A."/>
            <person name="Holeva M.C."/>
            <person name="He S.Y."/>
            <person name="Douet V."/>
            <person name="Boccara M."/>
            <person name="Blanco C."/>
            <person name="Toth I."/>
            <person name="Anderson B.D."/>
            <person name="Biehl B.S."/>
            <person name="Mau B."/>
            <person name="Flynn S.M."/>
            <person name="Barras F."/>
            <person name="Lindeberg M."/>
            <person name="Birch P.R."/>
            <person name="Tsuyumu S."/>
            <person name="Shi X."/>
            <person name="Hibbing M."/>
            <person name="Yap M.N."/>
            <person name="Carpentier M."/>
            <person name="Dassa E."/>
            <person name="Umehara M."/>
            <person name="Kim J.F."/>
            <person name="Rusch M."/>
            <person name="Soni P."/>
            <person name="Mayhew G.F."/>
            <person name="Fouts D.E."/>
            <person name="Gill S.R."/>
            <person name="Blattner F.R."/>
            <person name="Keen N.T."/>
            <person name="Perna N.T."/>
        </authorList>
    </citation>
    <scope>NUCLEOTIDE SEQUENCE [LARGE SCALE GENOMIC DNA]</scope>
    <source>
        <strain>3937</strain>
    </source>
</reference>
<reference evidence="9" key="3">
    <citation type="journal article" date="2013" name="Acta Crystallogr. D">
        <title>Anatomy of secretin binding to the Dickeya dadantii type II secretion system pilotin.</title>
        <authorList>
            <person name="Rehman S."/>
            <person name="Gu S."/>
            <person name="Shevchik V.E."/>
            <person name="Pickersgill R.W."/>
        </authorList>
    </citation>
    <scope>X-RAY CRYSTALLOGRAPHY (2.15 ANGSTROMS) OF 693-705</scope>
    <scope>SUBUNIT</scope>
    <scope>DOMAIN</scope>
</reference>
<dbReference type="EMBL" id="X65265">
    <property type="protein sequence ID" value="CAA46370.1"/>
    <property type="molecule type" value="Genomic_DNA"/>
</dbReference>
<dbReference type="EMBL" id="CP002038">
    <property type="protein sequence ID" value="ADM99376.1"/>
    <property type="molecule type" value="Genomic_DNA"/>
</dbReference>
<dbReference type="PIR" id="S28014">
    <property type="entry name" value="S28014"/>
</dbReference>
<dbReference type="RefSeq" id="WP_013318810.1">
    <property type="nucleotide sequence ID" value="NC_014500.1"/>
</dbReference>
<dbReference type="PDB" id="4K0U">
    <property type="method" value="X-ray"/>
    <property type="resolution" value="2.15 A"/>
    <property type="chains" value="B=693-705"/>
</dbReference>
<dbReference type="PDBsum" id="4K0U"/>
<dbReference type="SMR" id="Q01565"/>
<dbReference type="STRING" id="198628.Dda3937_02415"/>
<dbReference type="KEGG" id="ddd:Dda3937_02415"/>
<dbReference type="PATRIC" id="fig|198628.6.peg.3137"/>
<dbReference type="eggNOG" id="COG1450">
    <property type="taxonomic scope" value="Bacteria"/>
</dbReference>
<dbReference type="HOGENOM" id="CLU_006756_1_1_6"/>
<dbReference type="OrthoDB" id="9779724at2"/>
<dbReference type="PHI-base" id="PHI:123022"/>
<dbReference type="Proteomes" id="UP000006859">
    <property type="component" value="Chromosome"/>
</dbReference>
<dbReference type="GO" id="GO:0009279">
    <property type="term" value="C:cell outer membrane"/>
    <property type="evidence" value="ECO:0007669"/>
    <property type="project" value="UniProtKB-SubCell"/>
</dbReference>
<dbReference type="GO" id="GO:0015627">
    <property type="term" value="C:type II protein secretion system complex"/>
    <property type="evidence" value="ECO:0007669"/>
    <property type="project" value="InterPro"/>
</dbReference>
<dbReference type="GO" id="GO:0016485">
    <property type="term" value="P:protein processing"/>
    <property type="evidence" value="ECO:0000315"/>
    <property type="project" value="ASAP"/>
</dbReference>
<dbReference type="GO" id="GO:0015628">
    <property type="term" value="P:protein secretion by the type II secretion system"/>
    <property type="evidence" value="ECO:0007669"/>
    <property type="project" value="InterPro"/>
</dbReference>
<dbReference type="Gene3D" id="3.30.1370.120">
    <property type="match status" value="3"/>
</dbReference>
<dbReference type="InterPro" id="IPR050810">
    <property type="entry name" value="Bact_Secretion_Sys_Channel"/>
</dbReference>
<dbReference type="InterPro" id="IPR049371">
    <property type="entry name" value="GspD-like_N0"/>
</dbReference>
<dbReference type="InterPro" id="IPR001775">
    <property type="entry name" value="GspD/PilQ"/>
</dbReference>
<dbReference type="InterPro" id="IPR005644">
    <property type="entry name" value="NolW-like"/>
</dbReference>
<dbReference type="InterPro" id="IPR038591">
    <property type="entry name" value="NolW-like_sf"/>
</dbReference>
<dbReference type="InterPro" id="IPR004846">
    <property type="entry name" value="T2SS/T3SS_dom"/>
</dbReference>
<dbReference type="InterPro" id="IPR013356">
    <property type="entry name" value="T2SS_GspD"/>
</dbReference>
<dbReference type="InterPro" id="IPR004845">
    <property type="entry name" value="T2SS_GspD_CS"/>
</dbReference>
<dbReference type="NCBIfam" id="TIGR02517">
    <property type="entry name" value="type_II_gspD"/>
    <property type="match status" value="1"/>
</dbReference>
<dbReference type="PANTHER" id="PTHR30332">
    <property type="entry name" value="PROBABLE GENERAL SECRETION PATHWAY PROTEIN D"/>
    <property type="match status" value="1"/>
</dbReference>
<dbReference type="PANTHER" id="PTHR30332:SF24">
    <property type="entry name" value="SECRETIN GSPD-RELATED"/>
    <property type="match status" value="1"/>
</dbReference>
<dbReference type="Pfam" id="PF00263">
    <property type="entry name" value="Secretin"/>
    <property type="match status" value="1"/>
</dbReference>
<dbReference type="Pfam" id="PF03958">
    <property type="entry name" value="Secretin_N"/>
    <property type="match status" value="3"/>
</dbReference>
<dbReference type="Pfam" id="PF21305">
    <property type="entry name" value="type_II_gspD_N0"/>
    <property type="match status" value="1"/>
</dbReference>
<dbReference type="PRINTS" id="PR00811">
    <property type="entry name" value="BCTERIALGSPD"/>
</dbReference>
<dbReference type="PROSITE" id="PS00875">
    <property type="entry name" value="T2SP_D"/>
    <property type="match status" value="1"/>
</dbReference>
<gene>
    <name type="primary">outD</name>
    <name type="ordered locus">Dda3937_02415</name>
</gene>
<accession>Q01565</accession>
<accession>E0SM41</accession>
<protein>
    <recommendedName>
        <fullName>Secretin OutD</fullName>
    </recommendedName>
    <alternativeName>
        <fullName>General secretion pathway protein D</fullName>
    </alternativeName>
    <alternativeName>
        <fullName>Pectic enzymes secretion protein OutD</fullName>
    </alternativeName>
    <alternativeName>
        <fullName>Type II secretion system protein D</fullName>
        <shortName>T2SS protein D</shortName>
    </alternativeName>
</protein>